<reference key="1">
    <citation type="journal article" date="2008" name="J. Bacteriol.">
        <title>The pangenome structure of Escherichia coli: comparative genomic analysis of E. coli commensal and pathogenic isolates.</title>
        <authorList>
            <person name="Rasko D.A."/>
            <person name="Rosovitz M.J."/>
            <person name="Myers G.S.A."/>
            <person name="Mongodin E.F."/>
            <person name="Fricke W.F."/>
            <person name="Gajer P."/>
            <person name="Crabtree J."/>
            <person name="Sebaihia M."/>
            <person name="Thomson N.R."/>
            <person name="Chaudhuri R."/>
            <person name="Henderson I.R."/>
            <person name="Sperandio V."/>
            <person name="Ravel J."/>
        </authorList>
    </citation>
    <scope>NUCLEOTIDE SEQUENCE [LARGE SCALE GENOMIC DNA]</scope>
    <source>
        <strain>HS</strain>
    </source>
</reference>
<gene>
    <name evidence="1" type="primary">lexA</name>
    <name type="ordered locus">EcHS_A4283</name>
</gene>
<organism>
    <name type="scientific">Escherichia coli O9:H4 (strain HS)</name>
    <dbReference type="NCBI Taxonomy" id="331112"/>
    <lineage>
        <taxon>Bacteria</taxon>
        <taxon>Pseudomonadati</taxon>
        <taxon>Pseudomonadota</taxon>
        <taxon>Gammaproteobacteria</taxon>
        <taxon>Enterobacterales</taxon>
        <taxon>Enterobacteriaceae</taxon>
        <taxon>Escherichia</taxon>
    </lineage>
</organism>
<accession>A8A7E3</accession>
<name>LEXA_ECOHS</name>
<dbReference type="EC" id="3.4.21.88" evidence="1"/>
<dbReference type="EMBL" id="CP000802">
    <property type="protein sequence ID" value="ABV08447.1"/>
    <property type="molecule type" value="Genomic_DNA"/>
</dbReference>
<dbReference type="RefSeq" id="WP_000646078.1">
    <property type="nucleotide sequence ID" value="NC_009800.1"/>
</dbReference>
<dbReference type="SMR" id="A8A7E3"/>
<dbReference type="MEROPS" id="S24.001"/>
<dbReference type="GeneID" id="93777788"/>
<dbReference type="KEGG" id="ecx:EcHS_A4283"/>
<dbReference type="HOGENOM" id="CLU_066192_45_3_6"/>
<dbReference type="GO" id="GO:0003677">
    <property type="term" value="F:DNA binding"/>
    <property type="evidence" value="ECO:0007669"/>
    <property type="project" value="UniProtKB-UniRule"/>
</dbReference>
<dbReference type="GO" id="GO:0004252">
    <property type="term" value="F:serine-type endopeptidase activity"/>
    <property type="evidence" value="ECO:0007669"/>
    <property type="project" value="UniProtKB-UniRule"/>
</dbReference>
<dbReference type="GO" id="GO:0006281">
    <property type="term" value="P:DNA repair"/>
    <property type="evidence" value="ECO:0007669"/>
    <property type="project" value="UniProtKB-UniRule"/>
</dbReference>
<dbReference type="GO" id="GO:0006260">
    <property type="term" value="P:DNA replication"/>
    <property type="evidence" value="ECO:0007669"/>
    <property type="project" value="UniProtKB-UniRule"/>
</dbReference>
<dbReference type="GO" id="GO:0045892">
    <property type="term" value="P:negative regulation of DNA-templated transcription"/>
    <property type="evidence" value="ECO:0007669"/>
    <property type="project" value="UniProtKB-UniRule"/>
</dbReference>
<dbReference type="GO" id="GO:0006508">
    <property type="term" value="P:proteolysis"/>
    <property type="evidence" value="ECO:0007669"/>
    <property type="project" value="InterPro"/>
</dbReference>
<dbReference type="GO" id="GO:0009432">
    <property type="term" value="P:SOS response"/>
    <property type="evidence" value="ECO:0007669"/>
    <property type="project" value="UniProtKB-UniRule"/>
</dbReference>
<dbReference type="CDD" id="cd06529">
    <property type="entry name" value="S24_LexA-like"/>
    <property type="match status" value="1"/>
</dbReference>
<dbReference type="FunFam" id="1.10.10.10:FF:000009">
    <property type="entry name" value="LexA repressor"/>
    <property type="match status" value="1"/>
</dbReference>
<dbReference type="FunFam" id="2.10.109.10:FF:000001">
    <property type="entry name" value="LexA repressor"/>
    <property type="match status" value="1"/>
</dbReference>
<dbReference type="Gene3D" id="2.10.109.10">
    <property type="entry name" value="Umud Fragment, subunit A"/>
    <property type="match status" value="1"/>
</dbReference>
<dbReference type="Gene3D" id="1.10.10.10">
    <property type="entry name" value="Winged helix-like DNA-binding domain superfamily/Winged helix DNA-binding domain"/>
    <property type="match status" value="1"/>
</dbReference>
<dbReference type="HAMAP" id="MF_00015">
    <property type="entry name" value="LexA"/>
    <property type="match status" value="1"/>
</dbReference>
<dbReference type="InterPro" id="IPR006200">
    <property type="entry name" value="LexA"/>
</dbReference>
<dbReference type="InterPro" id="IPR039418">
    <property type="entry name" value="LexA-like"/>
</dbReference>
<dbReference type="InterPro" id="IPR036286">
    <property type="entry name" value="LexA/Signal_pep-like_sf"/>
</dbReference>
<dbReference type="InterPro" id="IPR006199">
    <property type="entry name" value="LexA_DNA-bd_dom"/>
</dbReference>
<dbReference type="InterPro" id="IPR050077">
    <property type="entry name" value="LexA_repressor"/>
</dbReference>
<dbReference type="InterPro" id="IPR006197">
    <property type="entry name" value="Peptidase_S24_LexA"/>
</dbReference>
<dbReference type="InterPro" id="IPR015927">
    <property type="entry name" value="Peptidase_S24_S26A/B/C"/>
</dbReference>
<dbReference type="InterPro" id="IPR036388">
    <property type="entry name" value="WH-like_DNA-bd_sf"/>
</dbReference>
<dbReference type="InterPro" id="IPR036390">
    <property type="entry name" value="WH_DNA-bd_sf"/>
</dbReference>
<dbReference type="NCBIfam" id="TIGR00498">
    <property type="entry name" value="lexA"/>
    <property type="match status" value="1"/>
</dbReference>
<dbReference type="PANTHER" id="PTHR33516">
    <property type="entry name" value="LEXA REPRESSOR"/>
    <property type="match status" value="1"/>
</dbReference>
<dbReference type="PANTHER" id="PTHR33516:SF2">
    <property type="entry name" value="LEXA REPRESSOR-RELATED"/>
    <property type="match status" value="1"/>
</dbReference>
<dbReference type="Pfam" id="PF01726">
    <property type="entry name" value="LexA_DNA_bind"/>
    <property type="match status" value="1"/>
</dbReference>
<dbReference type="Pfam" id="PF00717">
    <property type="entry name" value="Peptidase_S24"/>
    <property type="match status" value="1"/>
</dbReference>
<dbReference type="PRINTS" id="PR00726">
    <property type="entry name" value="LEXASERPTASE"/>
</dbReference>
<dbReference type="SUPFAM" id="SSF51306">
    <property type="entry name" value="LexA/Signal peptidase"/>
    <property type="match status" value="1"/>
</dbReference>
<dbReference type="SUPFAM" id="SSF46785">
    <property type="entry name" value="Winged helix' DNA-binding domain"/>
    <property type="match status" value="1"/>
</dbReference>
<feature type="chain" id="PRO_1000057129" description="LexA repressor">
    <location>
        <begin position="1"/>
        <end position="202"/>
    </location>
</feature>
<feature type="DNA-binding region" description="H-T-H motif" evidence="1">
    <location>
        <begin position="28"/>
        <end position="48"/>
    </location>
</feature>
<feature type="active site" description="For autocatalytic cleavage activity" evidence="1">
    <location>
        <position position="119"/>
    </location>
</feature>
<feature type="active site" description="For autocatalytic cleavage activity" evidence="1">
    <location>
        <position position="156"/>
    </location>
</feature>
<feature type="site" description="Cleavage; by autolysis" evidence="1">
    <location>
        <begin position="84"/>
        <end position="85"/>
    </location>
</feature>
<sequence length="202" mass="22358">MKALTARQQEVFDLIRDHISQTGMPPTRAEIAQRLGFRSPNAAEEHLKALARKGVIEIVSGASRGIRLLQEEEEGLPLVGRVAAGEPLLAQQHIEGHYQVDPSLFKPNADFLLRVSGMSMKDIGIMDGDLLAVHKTQDVRNGQVVVARIDDEVTVKRLKKQGNKVELLPENSEFKPIVVDLRQQSFTIEGLAVGVIRNGDWL</sequence>
<protein>
    <recommendedName>
        <fullName evidence="1">LexA repressor</fullName>
        <ecNumber evidence="1">3.4.21.88</ecNumber>
    </recommendedName>
</protein>
<keyword id="KW-0068">Autocatalytic cleavage</keyword>
<keyword id="KW-0227">DNA damage</keyword>
<keyword id="KW-0234">DNA repair</keyword>
<keyword id="KW-0235">DNA replication</keyword>
<keyword id="KW-0238">DNA-binding</keyword>
<keyword id="KW-0378">Hydrolase</keyword>
<keyword id="KW-0678">Repressor</keyword>
<keyword id="KW-0742">SOS response</keyword>
<keyword id="KW-0804">Transcription</keyword>
<keyword id="KW-0805">Transcription regulation</keyword>
<comment type="function">
    <text evidence="1">Represses a number of genes involved in the response to DNA damage (SOS response), including recA and lexA. Binds to the 16 bp palindromic sequence 5'-CTGTATATATATACAG-3'. In the presence of single-stranded DNA, RecA interacts with LexA causing an autocatalytic cleavage which disrupts the DNA-binding part of LexA, leading to derepression of the SOS regulon and eventually DNA repair.</text>
</comment>
<comment type="catalytic activity">
    <reaction evidence="1">
        <text>Hydrolysis of Ala-|-Gly bond in repressor LexA.</text>
        <dbReference type="EC" id="3.4.21.88"/>
    </reaction>
</comment>
<comment type="subunit">
    <text evidence="1">Homodimer.</text>
</comment>
<comment type="similarity">
    <text evidence="1">Belongs to the peptidase S24 family.</text>
</comment>
<proteinExistence type="inferred from homology"/>
<evidence type="ECO:0000255" key="1">
    <source>
        <dbReference type="HAMAP-Rule" id="MF_00015"/>
    </source>
</evidence>